<proteinExistence type="inferred from homology"/>
<reference key="1">
    <citation type="journal article" date="1986" name="Mol. Biol. Evol.">
        <title>Nucleotide sequence of the genes for tryptophan synthase in Pseudomonas aeruginosa.</title>
        <authorList>
            <person name="Hadero A."/>
            <person name="Crawford I.P."/>
        </authorList>
    </citation>
    <scope>NUCLEOTIDE SEQUENCE [GENOMIC DNA]</scope>
    <source>
        <strain>ATCC 15692 / DSM 22644 / CIP 104116 / JCM 14847 / LMG 12228 / 1C / PRS 101 / PAO1</strain>
    </source>
</reference>
<reference key="2">
    <citation type="submission" date="1989-03" db="EMBL/GenBank/DDBJ databases">
        <authorList>
            <person name="Crawford I.P."/>
            <person name="Eberly L."/>
        </authorList>
    </citation>
    <scope>SEQUENCE REVISION</scope>
</reference>
<reference key="3">
    <citation type="journal article" date="2000" name="Nature">
        <title>Complete genome sequence of Pseudomonas aeruginosa PAO1, an opportunistic pathogen.</title>
        <authorList>
            <person name="Stover C.K."/>
            <person name="Pham X.-Q.T."/>
            <person name="Erwin A.L."/>
            <person name="Mizoguchi S.D."/>
            <person name="Warrener P."/>
            <person name="Hickey M.J."/>
            <person name="Brinkman F.S.L."/>
            <person name="Hufnagle W.O."/>
            <person name="Kowalik D.J."/>
            <person name="Lagrou M."/>
            <person name="Garber R.L."/>
            <person name="Goltry L."/>
            <person name="Tolentino E."/>
            <person name="Westbrock-Wadman S."/>
            <person name="Yuan Y."/>
            <person name="Brody L.L."/>
            <person name="Coulter S.N."/>
            <person name="Folger K.R."/>
            <person name="Kas A."/>
            <person name="Larbig K."/>
            <person name="Lim R.M."/>
            <person name="Smith K.A."/>
            <person name="Spencer D.H."/>
            <person name="Wong G.K.-S."/>
            <person name="Wu Z."/>
            <person name="Paulsen I.T."/>
            <person name="Reizer J."/>
            <person name="Saier M.H. Jr."/>
            <person name="Hancock R.E.W."/>
            <person name="Lory S."/>
            <person name="Olson M.V."/>
        </authorList>
    </citation>
    <scope>NUCLEOTIDE SEQUENCE [LARGE SCALE GENOMIC DNA]</scope>
    <source>
        <strain>ATCC 15692 / DSM 22644 / CIP 104116 / JCM 14847 / LMG 12228 / 1C / PRS 101 / PAO1</strain>
    </source>
</reference>
<name>TRPA_PSEAE</name>
<dbReference type="EC" id="4.2.1.20" evidence="1"/>
<dbReference type="EMBL" id="M15826">
    <property type="protein sequence ID" value="AAA88463.1"/>
    <property type="molecule type" value="Genomic_DNA"/>
</dbReference>
<dbReference type="EMBL" id="AE004091">
    <property type="protein sequence ID" value="AAG03425.1"/>
    <property type="molecule type" value="Genomic_DNA"/>
</dbReference>
<dbReference type="PIR" id="B25355">
    <property type="entry name" value="TSPSAA"/>
</dbReference>
<dbReference type="PIR" id="G83640">
    <property type="entry name" value="G83640"/>
</dbReference>
<dbReference type="RefSeq" id="NP_248725.1">
    <property type="nucleotide sequence ID" value="NC_002516.2"/>
</dbReference>
<dbReference type="RefSeq" id="WP_003115801.1">
    <property type="nucleotide sequence ID" value="NZ_QZGE01000012.1"/>
</dbReference>
<dbReference type="SMR" id="P07344"/>
<dbReference type="FunCoup" id="P07344">
    <property type="interactions" value="645"/>
</dbReference>
<dbReference type="STRING" id="208964.PA0035"/>
<dbReference type="PaxDb" id="208964-PA0035"/>
<dbReference type="DNASU" id="879479"/>
<dbReference type="GeneID" id="879479"/>
<dbReference type="KEGG" id="pae:PA0035"/>
<dbReference type="PATRIC" id="fig|208964.12.peg.35"/>
<dbReference type="PseudoCAP" id="PA0035"/>
<dbReference type="HOGENOM" id="CLU_016734_0_4_6"/>
<dbReference type="InParanoid" id="P07344"/>
<dbReference type="OrthoDB" id="9804578at2"/>
<dbReference type="PhylomeDB" id="P07344"/>
<dbReference type="BioCyc" id="PAER208964:G1FZ6-36-MONOMER"/>
<dbReference type="UniPathway" id="UPA00035">
    <property type="reaction ID" value="UER00044"/>
</dbReference>
<dbReference type="Proteomes" id="UP000002438">
    <property type="component" value="Chromosome"/>
</dbReference>
<dbReference type="GO" id="GO:0005829">
    <property type="term" value="C:cytosol"/>
    <property type="evidence" value="ECO:0000318"/>
    <property type="project" value="GO_Central"/>
</dbReference>
<dbReference type="GO" id="GO:0004834">
    <property type="term" value="F:tryptophan synthase activity"/>
    <property type="evidence" value="ECO:0000318"/>
    <property type="project" value="GO_Central"/>
</dbReference>
<dbReference type="GO" id="GO:0000162">
    <property type="term" value="P:L-tryptophan biosynthetic process"/>
    <property type="evidence" value="ECO:0000314"/>
    <property type="project" value="PseudoCAP"/>
</dbReference>
<dbReference type="CDD" id="cd04724">
    <property type="entry name" value="Tryptophan_synthase_alpha"/>
    <property type="match status" value="1"/>
</dbReference>
<dbReference type="FunFam" id="3.20.20.70:FF:000037">
    <property type="entry name" value="Tryptophan synthase alpha chain"/>
    <property type="match status" value="1"/>
</dbReference>
<dbReference type="Gene3D" id="3.20.20.70">
    <property type="entry name" value="Aldolase class I"/>
    <property type="match status" value="1"/>
</dbReference>
<dbReference type="HAMAP" id="MF_00131">
    <property type="entry name" value="Trp_synth_alpha"/>
    <property type="match status" value="1"/>
</dbReference>
<dbReference type="InterPro" id="IPR013785">
    <property type="entry name" value="Aldolase_TIM"/>
</dbReference>
<dbReference type="InterPro" id="IPR011060">
    <property type="entry name" value="RibuloseP-bd_barrel"/>
</dbReference>
<dbReference type="InterPro" id="IPR018204">
    <property type="entry name" value="Trp_synthase_alpha_AS"/>
</dbReference>
<dbReference type="InterPro" id="IPR002028">
    <property type="entry name" value="Trp_synthase_suA"/>
</dbReference>
<dbReference type="NCBIfam" id="TIGR00262">
    <property type="entry name" value="trpA"/>
    <property type="match status" value="1"/>
</dbReference>
<dbReference type="PANTHER" id="PTHR43406:SF1">
    <property type="entry name" value="TRYPTOPHAN SYNTHASE ALPHA CHAIN, CHLOROPLASTIC"/>
    <property type="match status" value="1"/>
</dbReference>
<dbReference type="PANTHER" id="PTHR43406">
    <property type="entry name" value="TRYPTOPHAN SYNTHASE, ALPHA CHAIN"/>
    <property type="match status" value="1"/>
</dbReference>
<dbReference type="Pfam" id="PF00290">
    <property type="entry name" value="Trp_syntA"/>
    <property type="match status" value="1"/>
</dbReference>
<dbReference type="SUPFAM" id="SSF51366">
    <property type="entry name" value="Ribulose-phoshate binding barrel"/>
    <property type="match status" value="1"/>
</dbReference>
<dbReference type="PROSITE" id="PS00167">
    <property type="entry name" value="TRP_SYNTHASE_ALPHA"/>
    <property type="match status" value="1"/>
</dbReference>
<evidence type="ECO:0000255" key="1">
    <source>
        <dbReference type="HAMAP-Rule" id="MF_00131"/>
    </source>
</evidence>
<evidence type="ECO:0000305" key="2"/>
<comment type="function">
    <text evidence="1">The alpha subunit is responsible for the aldol cleavage of indoleglycerol phosphate to indole and glyceraldehyde 3-phosphate.</text>
</comment>
<comment type="catalytic activity">
    <reaction evidence="1">
        <text>(1S,2R)-1-C-(indol-3-yl)glycerol 3-phosphate + L-serine = D-glyceraldehyde 3-phosphate + L-tryptophan + H2O</text>
        <dbReference type="Rhea" id="RHEA:10532"/>
        <dbReference type="ChEBI" id="CHEBI:15377"/>
        <dbReference type="ChEBI" id="CHEBI:33384"/>
        <dbReference type="ChEBI" id="CHEBI:57912"/>
        <dbReference type="ChEBI" id="CHEBI:58866"/>
        <dbReference type="ChEBI" id="CHEBI:59776"/>
        <dbReference type="EC" id="4.2.1.20"/>
    </reaction>
</comment>
<comment type="pathway">
    <text evidence="1">Amino-acid biosynthesis; L-tryptophan biosynthesis; L-tryptophan from chorismate: step 5/5.</text>
</comment>
<comment type="subunit">
    <text evidence="1">Tetramer of two alpha and two beta chains.</text>
</comment>
<comment type="similarity">
    <text evidence="1">Belongs to the TrpA family.</text>
</comment>
<organism>
    <name type="scientific">Pseudomonas aeruginosa (strain ATCC 15692 / DSM 22644 / CIP 104116 / JCM 14847 / LMG 12228 / 1C / PRS 101 / PAO1)</name>
    <dbReference type="NCBI Taxonomy" id="208964"/>
    <lineage>
        <taxon>Bacteria</taxon>
        <taxon>Pseudomonadati</taxon>
        <taxon>Pseudomonadota</taxon>
        <taxon>Gammaproteobacteria</taxon>
        <taxon>Pseudomonadales</taxon>
        <taxon>Pseudomonadaceae</taxon>
        <taxon>Pseudomonas</taxon>
    </lineage>
</organism>
<protein>
    <recommendedName>
        <fullName evidence="1">Tryptophan synthase alpha chain</fullName>
        <ecNumber evidence="1">4.2.1.20</ecNumber>
    </recommendedName>
</protein>
<keyword id="KW-0028">Amino-acid biosynthesis</keyword>
<keyword id="KW-0057">Aromatic amino acid biosynthesis</keyword>
<keyword id="KW-0456">Lyase</keyword>
<keyword id="KW-1185">Reference proteome</keyword>
<keyword id="KW-0822">Tryptophan biosynthesis</keyword>
<sequence length="268" mass="28488">MSRLQTRFAQLKQENRAALVTFVTAGDPDYASSLEILKGLPAAGADVIELGMPFTDPMADGPAIQLANIRALDGGQTLARTLQMVREFRSGDSETPLVLMGYFNPIHHYGVERFIAEAKEVGVDGLIVVDLPPEHNEDLCHPAQAAGIDFIRLTTPTTGDQRLPTVLEGSSGFVYYVSVAGVTGANAATLEHVEEAVARLRRHTDLPIGIGFGIRSAEHAAAVARLADGVVVGSALIDRIAKARDNAQAVKDVLALCGELAEGVRNAR</sequence>
<accession>P07344</accession>
<feature type="chain" id="PRO_0000098825" description="Tryptophan synthase alpha chain">
    <location>
        <begin position="1"/>
        <end position="268"/>
    </location>
</feature>
<feature type="active site" description="Proton acceptor" evidence="1">
    <location>
        <position position="49"/>
    </location>
</feature>
<feature type="active site" description="Proton acceptor" evidence="1">
    <location>
        <position position="60"/>
    </location>
</feature>
<feature type="sequence conflict" description="In Ref. 1; AAA88463." evidence="2" ref="1">
    <original>A</original>
    <variation>G</variation>
    <location>
        <position position="42"/>
    </location>
</feature>
<feature type="sequence conflict" description="In Ref. 1; AAA88463." evidence="2" ref="1">
    <original>D</original>
    <variation>E</variation>
    <location>
        <position position="73"/>
    </location>
</feature>
<feature type="sequence conflict" description="In Ref. 1; AAA88463." evidence="2" ref="1">
    <original>I</original>
    <variation>L</variation>
    <location>
        <position position="148"/>
    </location>
</feature>
<gene>
    <name evidence="1" type="primary">trpA</name>
    <name type="ordered locus">PA0035</name>
</gene>